<sequence length="543" mass="61451">MESLLRQLSICNELIAQGSCTAGHIDWLNDFCATFLDFASELKAHLPEVAPRWPAEGGTNIDVETIFLCLTQVVTCITQLERTINIEGASARATPMTRLHFLDRIDWCVRRIIFCLSQLHLQRANDQSNSLEDHTFVELMDLALDHLEAFMETLANTTPTNLLCIVEENELQLGSIVNHIVRHALAFANVALEADKKALSELCETLLSECATFLEDSGELNPGHRKLEGLSLERALYGLETYLNEALLHLIFACIVELENTPISKLRHAPDSEFTEQLVLDFDTNMDRIQQIGVLAIAFSQDIKTKTIVRSCLASLESLDACIVPALQSSALHPHHADILEHHFNEEILIFRNLIHEIIDSRSLINNYLDMLAESIHLAVKRPPRDHLLIVQMGSVLEEHFRLPVNYSELSQLDGKRLHTDFMLILSECLAVVSSPLGEPKRIVKRLKILYSVLAKLRHAIDRNKYVHEDSSASVPNVSSRRQFTNATRTLLRMKSKSKRQRSFVRQRRDCLVPNPQNCSISNSISHQGDLISFQLTEILRIN</sequence>
<gene>
    <name type="primary">Sry-alpha</name>
    <name type="synonym">Sry-a</name>
</gene>
<comment type="function">
    <text evidence="1">Required for the cellularization of the syncytial blastoderm embryo. Involved in the localization of the actin filaments just prior to and during plasma membrane invagination. Sry-alpha together with nullo and bnk may provide auxiliary functions, by acting both to stabilize a large and dynamic microfilament structure and regulate its functions (By similarity).</text>
</comment>
<comment type="subcellular location">
    <subcellularLocation>
        <location evidence="1">Cytoplasm</location>
    </subcellularLocation>
    <subcellularLocation>
        <location evidence="1">Cell membrane</location>
        <topology evidence="1">Peripheral membrane protein</topology>
        <orientation evidence="1">Cytoplasmic side</orientation>
    </subcellularLocation>
    <text evidence="1">Inner membrane-associated and cytoplasmic. Colocalizes with the structural transitions in the microfilament network during cellularization (By similarity).</text>
</comment>
<comment type="developmental stage">
    <text>Blastoderm.</text>
</comment>
<reference key="1">
    <citation type="journal article" date="1993" name="Development">
        <title>Relationship between expression of serendipity alpha and cellularisation of the Drosophila embryo as revealed by interspecific transformation.</title>
        <authorList>
            <person name="Ibnsouda S."/>
            <person name="Schweisguth F."/>
            <person name="de Billy G."/>
            <person name="Vincent A."/>
        </authorList>
    </citation>
    <scope>NUCLEOTIDE SEQUENCE</scope>
</reference>
<feature type="chain" id="PRO_0000072199" description="Serendipity locus protein alpha">
    <location>
        <begin position="1"/>
        <end position="543"/>
    </location>
</feature>
<keyword id="KW-1003">Cell membrane</keyword>
<keyword id="KW-0963">Cytoplasm</keyword>
<keyword id="KW-0217">Developmental protein</keyword>
<keyword id="KW-0472">Membrane</keyword>
<name>SRYA_DROSU</name>
<organism>
    <name type="scientific">Drosophila subobscura</name>
    <name type="common">Fruit fly</name>
    <dbReference type="NCBI Taxonomy" id="7241"/>
    <lineage>
        <taxon>Eukaryota</taxon>
        <taxon>Metazoa</taxon>
        <taxon>Ecdysozoa</taxon>
        <taxon>Arthropoda</taxon>
        <taxon>Hexapoda</taxon>
        <taxon>Insecta</taxon>
        <taxon>Pterygota</taxon>
        <taxon>Neoptera</taxon>
        <taxon>Endopterygota</taxon>
        <taxon>Diptera</taxon>
        <taxon>Brachycera</taxon>
        <taxon>Muscomorpha</taxon>
        <taxon>Ephydroidea</taxon>
        <taxon>Drosophilidae</taxon>
        <taxon>Drosophila</taxon>
        <taxon>Sophophora</taxon>
    </lineage>
</organism>
<protein>
    <recommendedName>
        <fullName>Serendipity locus protein alpha</fullName>
    </recommendedName>
</protein>
<accession>Q07965</accession>
<proteinExistence type="evidence at transcript level"/>
<evidence type="ECO:0000250" key="1"/>
<dbReference type="EMBL" id="L19535">
    <property type="protein sequence ID" value="AAA17044.1"/>
    <property type="molecule type" value="Unassigned_DNA"/>
</dbReference>
<dbReference type="SMR" id="Q07965"/>
<dbReference type="GO" id="GO:0005912">
    <property type="term" value="C:adherens junction"/>
    <property type="evidence" value="ECO:0007669"/>
    <property type="project" value="TreeGrafter"/>
</dbReference>
<dbReference type="GO" id="GO:0016342">
    <property type="term" value="C:catenin complex"/>
    <property type="evidence" value="ECO:0007669"/>
    <property type="project" value="TreeGrafter"/>
</dbReference>
<dbReference type="GO" id="GO:0005737">
    <property type="term" value="C:cytoplasm"/>
    <property type="evidence" value="ECO:0007669"/>
    <property type="project" value="UniProtKB-SubCell"/>
</dbReference>
<dbReference type="GO" id="GO:0051015">
    <property type="term" value="F:actin filament binding"/>
    <property type="evidence" value="ECO:0007669"/>
    <property type="project" value="TreeGrafter"/>
</dbReference>
<dbReference type="GO" id="GO:0008013">
    <property type="term" value="F:beta-catenin binding"/>
    <property type="evidence" value="ECO:0007669"/>
    <property type="project" value="TreeGrafter"/>
</dbReference>
<dbReference type="GO" id="GO:0016477">
    <property type="term" value="P:cell migration"/>
    <property type="evidence" value="ECO:0007669"/>
    <property type="project" value="TreeGrafter"/>
</dbReference>
<dbReference type="GO" id="GO:0098609">
    <property type="term" value="P:cell-cell adhesion"/>
    <property type="evidence" value="ECO:0007669"/>
    <property type="project" value="TreeGrafter"/>
</dbReference>
<dbReference type="GO" id="GO:0007349">
    <property type="term" value="P:cellularization"/>
    <property type="evidence" value="ECO:0007669"/>
    <property type="project" value="InterPro"/>
</dbReference>
<dbReference type="Gene3D" id="1.20.120.810">
    <property type="entry name" value="Vinculin, Vh2 four-helix bundle"/>
    <property type="match status" value="1"/>
</dbReference>
<dbReference type="InterPro" id="IPR008837">
    <property type="entry name" value="Serendipity_A"/>
</dbReference>
<dbReference type="PANTHER" id="PTHR18914">
    <property type="entry name" value="ALPHA CATENIN"/>
    <property type="match status" value="1"/>
</dbReference>
<dbReference type="PANTHER" id="PTHR18914:SF33">
    <property type="entry name" value="RE47911P-RELATED"/>
    <property type="match status" value="1"/>
</dbReference>
<dbReference type="Pfam" id="PF05482">
    <property type="entry name" value="Serendipity_A"/>
    <property type="match status" value="1"/>
</dbReference>